<sequence length="172" mass="18932">MNPFRWGFRAQFLLGFLACAGLLAYAIYVQLHLGLEPCPLCIFQRIAFATLALLFLLGALHGPRGAGGRKAYGVLAFIAAGVGMGIAARHVWVQIRPKDMMSSCGPPLSFLSETMGPFEVFRTVLTGTGDCGNIDWRFLGLSMPMWSMVWFVGLALWALYAGFKHRGPRKLF</sequence>
<reference key="1">
    <citation type="journal article" date="2005" name="Genome Res.">
        <title>Comparative and functional genomic analyses of the pathogenicity of phytopathogen Xanthomonas campestris pv. campestris.</title>
        <authorList>
            <person name="Qian W."/>
            <person name="Jia Y."/>
            <person name="Ren S.-X."/>
            <person name="He Y.-Q."/>
            <person name="Feng J.-X."/>
            <person name="Lu L.-F."/>
            <person name="Sun Q."/>
            <person name="Ying G."/>
            <person name="Tang D.-J."/>
            <person name="Tang H."/>
            <person name="Wu W."/>
            <person name="Hao P."/>
            <person name="Wang L."/>
            <person name="Jiang B.-L."/>
            <person name="Zeng S."/>
            <person name="Gu W.-Y."/>
            <person name="Lu G."/>
            <person name="Rong L."/>
            <person name="Tian Y."/>
            <person name="Yao Z."/>
            <person name="Fu G."/>
            <person name="Chen B."/>
            <person name="Fang R."/>
            <person name="Qiang B."/>
            <person name="Chen Z."/>
            <person name="Zhao G.-P."/>
            <person name="Tang J.-L."/>
            <person name="He C."/>
        </authorList>
    </citation>
    <scope>NUCLEOTIDE SEQUENCE [LARGE SCALE GENOMIC DNA]</scope>
    <source>
        <strain>8004</strain>
    </source>
</reference>
<organism>
    <name type="scientific">Xanthomonas campestris pv. campestris (strain 8004)</name>
    <dbReference type="NCBI Taxonomy" id="314565"/>
    <lineage>
        <taxon>Bacteria</taxon>
        <taxon>Pseudomonadati</taxon>
        <taxon>Pseudomonadota</taxon>
        <taxon>Gammaproteobacteria</taxon>
        <taxon>Lysobacterales</taxon>
        <taxon>Lysobacteraceae</taxon>
        <taxon>Xanthomonas</taxon>
    </lineage>
</organism>
<protein>
    <recommendedName>
        <fullName evidence="1">Disulfide bond formation protein B</fullName>
    </recommendedName>
    <alternativeName>
        <fullName evidence="1">Disulfide oxidoreductase</fullName>
    </alternativeName>
</protein>
<comment type="function">
    <text evidence="1">Required for disulfide bond formation in some periplasmic proteins. Acts by oxidizing the DsbA protein.</text>
</comment>
<comment type="subcellular location">
    <subcellularLocation>
        <location evidence="1">Cell inner membrane</location>
        <topology evidence="1">Multi-pass membrane protein</topology>
    </subcellularLocation>
</comment>
<comment type="similarity">
    <text evidence="1">Belongs to the DsbB family.</text>
</comment>
<accession>Q4URG5</accession>
<proteinExistence type="inferred from homology"/>
<gene>
    <name evidence="1" type="primary">dsbB</name>
    <name type="ordered locus">XC_3314</name>
</gene>
<name>DSBB_XANC8</name>
<keyword id="KW-0997">Cell inner membrane</keyword>
<keyword id="KW-1003">Cell membrane</keyword>
<keyword id="KW-0143">Chaperone</keyword>
<keyword id="KW-1015">Disulfide bond</keyword>
<keyword id="KW-0249">Electron transport</keyword>
<keyword id="KW-0472">Membrane</keyword>
<keyword id="KW-0560">Oxidoreductase</keyword>
<keyword id="KW-0676">Redox-active center</keyword>
<keyword id="KW-0812">Transmembrane</keyword>
<keyword id="KW-1133">Transmembrane helix</keyword>
<keyword id="KW-0813">Transport</keyword>
<dbReference type="EMBL" id="CP000050">
    <property type="protein sequence ID" value="AAY50358.1"/>
    <property type="molecule type" value="Genomic_DNA"/>
</dbReference>
<dbReference type="RefSeq" id="WP_011036135.1">
    <property type="nucleotide sequence ID" value="NZ_CP155948.1"/>
</dbReference>
<dbReference type="SMR" id="Q4URG5"/>
<dbReference type="KEGG" id="xcb:XC_3314"/>
<dbReference type="HOGENOM" id="CLU_098660_1_1_6"/>
<dbReference type="Proteomes" id="UP000000420">
    <property type="component" value="Chromosome"/>
</dbReference>
<dbReference type="GO" id="GO:0005886">
    <property type="term" value="C:plasma membrane"/>
    <property type="evidence" value="ECO:0007669"/>
    <property type="project" value="UniProtKB-SubCell"/>
</dbReference>
<dbReference type="GO" id="GO:0009055">
    <property type="term" value="F:electron transfer activity"/>
    <property type="evidence" value="ECO:0007669"/>
    <property type="project" value="UniProtKB-UniRule"/>
</dbReference>
<dbReference type="GO" id="GO:0015035">
    <property type="term" value="F:protein-disulfide reductase activity"/>
    <property type="evidence" value="ECO:0007669"/>
    <property type="project" value="UniProtKB-UniRule"/>
</dbReference>
<dbReference type="GO" id="GO:0006457">
    <property type="term" value="P:protein folding"/>
    <property type="evidence" value="ECO:0007669"/>
    <property type="project" value="InterPro"/>
</dbReference>
<dbReference type="FunFam" id="1.20.1550.10:FF:000004">
    <property type="entry name" value="Disulfide bond formation protein B"/>
    <property type="match status" value="1"/>
</dbReference>
<dbReference type="Gene3D" id="1.20.1550.10">
    <property type="entry name" value="DsbB-like"/>
    <property type="match status" value="1"/>
</dbReference>
<dbReference type="HAMAP" id="MF_00286">
    <property type="entry name" value="DsbB"/>
    <property type="match status" value="1"/>
</dbReference>
<dbReference type="InterPro" id="IPR003752">
    <property type="entry name" value="DiS_bond_form_DsbB/BdbC"/>
</dbReference>
<dbReference type="InterPro" id="IPR022920">
    <property type="entry name" value="Disulphide_bond_form_DsbB"/>
</dbReference>
<dbReference type="InterPro" id="IPR050183">
    <property type="entry name" value="DsbB"/>
</dbReference>
<dbReference type="InterPro" id="IPR023380">
    <property type="entry name" value="DsbB-like_sf"/>
</dbReference>
<dbReference type="NCBIfam" id="NF003354">
    <property type="entry name" value="PRK04388.1"/>
    <property type="match status" value="1"/>
</dbReference>
<dbReference type="PANTHER" id="PTHR36570">
    <property type="entry name" value="DISULFIDE BOND FORMATION PROTEIN B"/>
    <property type="match status" value="1"/>
</dbReference>
<dbReference type="PANTHER" id="PTHR36570:SF3">
    <property type="entry name" value="DISULFIDE BOND FORMATION PROTEIN B"/>
    <property type="match status" value="1"/>
</dbReference>
<dbReference type="Pfam" id="PF02600">
    <property type="entry name" value="DsbB"/>
    <property type="match status" value="1"/>
</dbReference>
<dbReference type="SUPFAM" id="SSF158442">
    <property type="entry name" value="DsbB-like"/>
    <property type="match status" value="1"/>
</dbReference>
<feature type="chain" id="PRO_0000298421" description="Disulfide bond formation protein B">
    <location>
        <begin position="1"/>
        <end position="172"/>
    </location>
</feature>
<feature type="topological domain" description="Cytoplasmic" evidence="1">
    <location>
        <begin position="1"/>
        <end position="11"/>
    </location>
</feature>
<feature type="transmembrane region" description="Helical" evidence="1">
    <location>
        <begin position="12"/>
        <end position="28"/>
    </location>
</feature>
<feature type="topological domain" description="Periplasmic" evidence="1">
    <location>
        <begin position="29"/>
        <end position="46"/>
    </location>
</feature>
<feature type="transmembrane region" description="Helical" evidence="1">
    <location>
        <begin position="47"/>
        <end position="63"/>
    </location>
</feature>
<feature type="topological domain" description="Cytoplasmic" evidence="1">
    <location>
        <begin position="64"/>
        <end position="70"/>
    </location>
</feature>
<feature type="transmembrane region" description="Helical" evidence="1">
    <location>
        <begin position="71"/>
        <end position="88"/>
    </location>
</feature>
<feature type="topological domain" description="Periplasmic" evidence="1">
    <location>
        <begin position="89"/>
        <end position="145"/>
    </location>
</feature>
<feature type="transmembrane region" description="Helical" evidence="1">
    <location>
        <begin position="146"/>
        <end position="164"/>
    </location>
</feature>
<feature type="topological domain" description="Cytoplasmic" evidence="1">
    <location>
        <begin position="165"/>
        <end position="172"/>
    </location>
</feature>
<feature type="disulfide bond" description="Redox-active" evidence="1">
    <location>
        <begin position="38"/>
        <end position="41"/>
    </location>
</feature>
<feature type="disulfide bond" description="Redox-active" evidence="1">
    <location>
        <begin position="104"/>
        <end position="131"/>
    </location>
</feature>
<evidence type="ECO:0000255" key="1">
    <source>
        <dbReference type="HAMAP-Rule" id="MF_00286"/>
    </source>
</evidence>